<name>7OMT6_MEDSA</name>
<sequence>MASSINGRKPSEIFKAQALLYKHIYAFIDSMSLKWAVEMNIPNIIQNHGKPISLSNLVSILQVPSSKIGNVRRLMRYLAHNGFFEIITKEEESYALTVASELLVRGSDLCLAPMVECVLDPTLSGSYHELKKWIYEEDLTLFGVTLGSGFWDFLDKNPEYNTSFNDAMASDSKLINLALRDCDFVFDGLESIVDVGGGTGTTAKIICETFPKLKCIVFDRPQVVENLSGSNNLTYVGGDMFTSIPNADAVLLKYILHNWTDKDCLRILKKCKEAVTNDGKRGKVTIIDMVIDEKKDENQVTQIKLLMDVNMACLNGKERNEEEWKKLFIEAGFQHYKISPLTGFLSLIEIYP</sequence>
<accession>O22308</accession>
<feature type="chain" id="PRO_0000204436" description="Isoflavone-7-O-methyltransferase 6">
    <location>
        <begin position="1"/>
        <end position="352"/>
    </location>
</feature>
<feature type="active site" description="Proton acceptor">
    <location>
        <position position="257"/>
    </location>
</feature>
<feature type="binding site" evidence="1">
    <location>
        <begin position="118"/>
        <end position="127"/>
    </location>
    <ligand>
        <name>substrate</name>
    </ligand>
</feature>
<feature type="binding site" evidence="2">
    <location>
        <position position="196"/>
    </location>
    <ligand>
        <name>S-adenosyl-L-methionine</name>
        <dbReference type="ChEBI" id="CHEBI:59789"/>
    </ligand>
</feature>
<feature type="binding site" evidence="2">
    <location>
        <position position="219"/>
    </location>
    <ligand>
        <name>S-adenosyl-L-methionine</name>
        <dbReference type="ChEBI" id="CHEBI:59789"/>
    </ligand>
</feature>
<feature type="binding site" evidence="2">
    <location>
        <position position="239"/>
    </location>
    <ligand>
        <name>S-adenosyl-L-methionine</name>
        <dbReference type="ChEBI" id="CHEBI:59789"/>
    </ligand>
</feature>
<feature type="binding site" evidence="2">
    <location>
        <position position="240"/>
    </location>
    <ligand>
        <name>S-adenosyl-L-methionine</name>
        <dbReference type="ChEBI" id="CHEBI:59789"/>
    </ligand>
</feature>
<feature type="binding site" evidence="2">
    <location>
        <position position="253"/>
    </location>
    <ligand>
        <name>S-adenosyl-L-methionine</name>
        <dbReference type="ChEBI" id="CHEBI:59789"/>
    </ligand>
</feature>
<organism>
    <name type="scientific">Medicago sativa</name>
    <name type="common">Alfalfa</name>
    <dbReference type="NCBI Taxonomy" id="3879"/>
    <lineage>
        <taxon>Eukaryota</taxon>
        <taxon>Viridiplantae</taxon>
        <taxon>Streptophyta</taxon>
        <taxon>Embryophyta</taxon>
        <taxon>Tracheophyta</taxon>
        <taxon>Spermatophyta</taxon>
        <taxon>Magnoliopsida</taxon>
        <taxon>eudicotyledons</taxon>
        <taxon>Gunneridae</taxon>
        <taxon>Pentapetalae</taxon>
        <taxon>rosids</taxon>
        <taxon>fabids</taxon>
        <taxon>Fabales</taxon>
        <taxon>Fabaceae</taxon>
        <taxon>Papilionoideae</taxon>
        <taxon>50 kb inversion clade</taxon>
        <taxon>NPAAA clade</taxon>
        <taxon>Hologalegina</taxon>
        <taxon>IRL clade</taxon>
        <taxon>Trifolieae</taxon>
        <taxon>Medicago</taxon>
    </lineage>
</organism>
<comment type="function">
    <text>Transfers a methyl group to 7-hydroxyls of the isoflavones daidzein, genistein and 6,7,4'-trihydroxyisoflavone. Can also methylate (+)6a-hydroxymaackiain with lower efficiency.</text>
</comment>
<comment type="catalytic activity">
    <reaction>
        <text>a 7-hydroxyisoflavone + S-adenosyl-L-methionine = a 7-methoxyisoflavone + S-adenosyl-L-homocysteine + H(+)</text>
        <dbReference type="Rhea" id="RHEA:17933"/>
        <dbReference type="ChEBI" id="CHEBI:15378"/>
        <dbReference type="ChEBI" id="CHEBI:55465"/>
        <dbReference type="ChEBI" id="CHEBI:57856"/>
        <dbReference type="ChEBI" id="CHEBI:59789"/>
        <dbReference type="ChEBI" id="CHEBI:140356"/>
        <dbReference type="EC" id="2.1.1.150"/>
    </reaction>
</comment>
<comment type="pathway">
    <text>Phytoalexin biosynthesis; medicarpin biosynthesis.</text>
</comment>
<comment type="subunit">
    <text>Homodimer.</text>
</comment>
<comment type="similarity">
    <text evidence="2">Belongs to the class I-like SAM-binding methyltransferase superfamily. Cation-independent O-methyltransferase family. COMT subfamily.</text>
</comment>
<dbReference type="EC" id="2.1.1.150"/>
<dbReference type="EMBL" id="AF000975">
    <property type="protein sequence ID" value="AAC49926.1"/>
    <property type="molecule type" value="mRNA"/>
</dbReference>
<dbReference type="SMR" id="O22308"/>
<dbReference type="KEGG" id="ag:AAC49926"/>
<dbReference type="UniPathway" id="UPA00902"/>
<dbReference type="GO" id="GO:0033800">
    <property type="term" value="F:isoflavone 7-O-methyltransferase activity"/>
    <property type="evidence" value="ECO:0007669"/>
    <property type="project" value="UniProtKB-EC"/>
</dbReference>
<dbReference type="GO" id="GO:0046983">
    <property type="term" value="F:protein dimerization activity"/>
    <property type="evidence" value="ECO:0007669"/>
    <property type="project" value="InterPro"/>
</dbReference>
<dbReference type="GO" id="GO:0032259">
    <property type="term" value="P:methylation"/>
    <property type="evidence" value="ECO:0007669"/>
    <property type="project" value="UniProtKB-KW"/>
</dbReference>
<dbReference type="FunFam" id="1.10.10.10:FF:000213">
    <property type="entry name" value="Coniferyl alcohol 9-O-methyltransferase"/>
    <property type="match status" value="1"/>
</dbReference>
<dbReference type="FunFam" id="3.40.50.150:FF:000057">
    <property type="entry name" value="O-methyltransferase ZRP4"/>
    <property type="match status" value="1"/>
</dbReference>
<dbReference type="Gene3D" id="3.40.50.150">
    <property type="entry name" value="Vaccinia Virus protein VP39"/>
    <property type="match status" value="1"/>
</dbReference>
<dbReference type="Gene3D" id="1.10.10.10">
    <property type="entry name" value="Winged helix-like DNA-binding domain superfamily/Winged helix DNA-binding domain"/>
    <property type="match status" value="1"/>
</dbReference>
<dbReference type="InterPro" id="IPR016461">
    <property type="entry name" value="COMT-like"/>
</dbReference>
<dbReference type="InterPro" id="IPR001077">
    <property type="entry name" value="O_MeTrfase_dom"/>
</dbReference>
<dbReference type="InterPro" id="IPR012967">
    <property type="entry name" value="Plant_O-MeTrfase_dimerisation"/>
</dbReference>
<dbReference type="InterPro" id="IPR029063">
    <property type="entry name" value="SAM-dependent_MTases_sf"/>
</dbReference>
<dbReference type="InterPro" id="IPR036388">
    <property type="entry name" value="WH-like_DNA-bd_sf"/>
</dbReference>
<dbReference type="InterPro" id="IPR036390">
    <property type="entry name" value="WH_DNA-bd_sf"/>
</dbReference>
<dbReference type="PANTHER" id="PTHR11746">
    <property type="entry name" value="O-METHYLTRANSFERASE"/>
    <property type="match status" value="1"/>
</dbReference>
<dbReference type="Pfam" id="PF08100">
    <property type="entry name" value="Dimerisation"/>
    <property type="match status" value="1"/>
</dbReference>
<dbReference type="Pfam" id="PF00891">
    <property type="entry name" value="Methyltransf_2"/>
    <property type="match status" value="1"/>
</dbReference>
<dbReference type="PIRSF" id="PIRSF005739">
    <property type="entry name" value="O-mtase"/>
    <property type="match status" value="1"/>
</dbReference>
<dbReference type="SUPFAM" id="SSF53335">
    <property type="entry name" value="S-adenosyl-L-methionine-dependent methyltransferases"/>
    <property type="match status" value="1"/>
</dbReference>
<dbReference type="SUPFAM" id="SSF46785">
    <property type="entry name" value="Winged helix' DNA-binding domain"/>
    <property type="match status" value="1"/>
</dbReference>
<dbReference type="PROSITE" id="PS51683">
    <property type="entry name" value="SAM_OMT_II"/>
    <property type="match status" value="1"/>
</dbReference>
<evidence type="ECO:0000250" key="1"/>
<evidence type="ECO:0000255" key="2">
    <source>
        <dbReference type="PROSITE-ProRule" id="PRU01020"/>
    </source>
</evidence>
<protein>
    <recommendedName>
        <fullName>Isoflavone-7-O-methyltransferase 6</fullName>
        <ecNumber>2.1.1.150</ecNumber>
    </recommendedName>
    <alternativeName>
        <fullName>7-IOMT-6</fullName>
    </alternativeName>
    <alternativeName>
        <fullName>Isoflavone-O-methyltransferase 6</fullName>
    </alternativeName>
</protein>
<keyword id="KW-0489">Methyltransferase</keyword>
<keyword id="KW-0949">S-adenosyl-L-methionine</keyword>
<keyword id="KW-0808">Transferase</keyword>
<reference key="1">
    <citation type="journal article" date="1998" name="Plant Mol. Biol.">
        <title>Stress responses in alfalfa (Medicago sativa L). XXII. cDNA cloning and characterization of an elicitor-inducible isoflavone 7-O-methyltransferase.</title>
        <authorList>
            <person name="He X.-Z."/>
            <person name="Reddy J.T."/>
            <person name="Dixon R.A."/>
        </authorList>
    </citation>
    <scope>NUCLEOTIDE SEQUENCE [MRNA]</scope>
</reference>
<proteinExistence type="evidence at transcript level"/>